<dbReference type="EC" id="1.1.1.201" evidence="5"/>
<dbReference type="EMBL" id="AAYG02000020">
    <property type="protein sequence ID" value="EDN76974.1"/>
    <property type="molecule type" value="Genomic_DNA"/>
</dbReference>
<dbReference type="RefSeq" id="WP_004843516.1">
    <property type="nucleotide sequence ID" value="NZ_PUEL01000004.1"/>
</dbReference>
<dbReference type="SMR" id="A7B4V1"/>
<dbReference type="PaxDb" id="411470-RUMGNA_02585"/>
<dbReference type="eggNOG" id="COG0300">
    <property type="taxonomic scope" value="Bacteria"/>
</dbReference>
<dbReference type="BioCyc" id="MetaCyc:MONOMER-19021"/>
<dbReference type="BRENDA" id="1.1.1.201">
    <property type="organism ID" value="5479"/>
</dbReference>
<dbReference type="Proteomes" id="UP000004410">
    <property type="component" value="Unassembled WGS sequence"/>
</dbReference>
<dbReference type="GO" id="GO:0047022">
    <property type="term" value="F:7-beta-hydroxysteroid dehydrogenase (NADP+) activity"/>
    <property type="evidence" value="ECO:0007669"/>
    <property type="project" value="UniProtKB-EC"/>
</dbReference>
<dbReference type="GO" id="GO:0051287">
    <property type="term" value="F:NAD binding"/>
    <property type="evidence" value="ECO:0000250"/>
    <property type="project" value="UniProtKB"/>
</dbReference>
<dbReference type="GO" id="GO:0033764">
    <property type="term" value="F:steroid dehydrogenase activity, acting on the CH-OH group of donors, NAD or NADP as acceptor"/>
    <property type="evidence" value="ECO:0000314"/>
    <property type="project" value="UniProtKB"/>
</dbReference>
<dbReference type="GO" id="GO:0030573">
    <property type="term" value="P:bile acid catabolic process"/>
    <property type="evidence" value="ECO:0007669"/>
    <property type="project" value="UniProtKB-KW"/>
</dbReference>
<dbReference type="GO" id="GO:0016042">
    <property type="term" value="P:lipid catabolic process"/>
    <property type="evidence" value="ECO:0007669"/>
    <property type="project" value="UniProtKB-KW"/>
</dbReference>
<dbReference type="FunFam" id="3.40.50.720:FF:000990">
    <property type="entry name" value="SDR family oxidoreductase"/>
    <property type="match status" value="1"/>
</dbReference>
<dbReference type="Gene3D" id="3.40.50.720">
    <property type="entry name" value="NAD(P)-binding Rossmann-like Domain"/>
    <property type="match status" value="1"/>
</dbReference>
<dbReference type="InterPro" id="IPR036291">
    <property type="entry name" value="NAD(P)-bd_dom_sf"/>
</dbReference>
<dbReference type="InterPro" id="IPR002347">
    <property type="entry name" value="SDR_fam"/>
</dbReference>
<dbReference type="InterPro" id="IPR051019">
    <property type="entry name" value="VLCFA-Steroid_DH"/>
</dbReference>
<dbReference type="PANTHER" id="PTHR43899">
    <property type="entry name" value="RH59310P"/>
    <property type="match status" value="1"/>
</dbReference>
<dbReference type="PANTHER" id="PTHR43899:SF13">
    <property type="entry name" value="RH59310P"/>
    <property type="match status" value="1"/>
</dbReference>
<dbReference type="Pfam" id="PF00106">
    <property type="entry name" value="adh_short"/>
    <property type="match status" value="1"/>
</dbReference>
<dbReference type="PRINTS" id="PR00081">
    <property type="entry name" value="GDHRDH"/>
</dbReference>
<dbReference type="SUPFAM" id="SSF51735">
    <property type="entry name" value="NAD(P)-binding Rossmann-fold domains"/>
    <property type="match status" value="1"/>
</dbReference>
<reference key="1">
    <citation type="submission" date="2007-04" db="EMBL/GenBank/DDBJ databases">
        <authorList>
            <person name="Fulton L."/>
            <person name="Clifton S."/>
            <person name="Fulton B."/>
            <person name="Xu J."/>
            <person name="Minx P."/>
            <person name="Pepin K.H."/>
            <person name="Johnson M."/>
            <person name="Thiruvilangam P."/>
            <person name="Bhonagiri V."/>
            <person name="Nash W.E."/>
            <person name="Mardis E.R."/>
            <person name="Wilson R.K."/>
        </authorList>
    </citation>
    <scope>NUCLEOTIDE SEQUENCE [LARGE SCALE GENOMIC DNA]</scope>
    <source>
        <strain>ATCC 29149 / DSM 114966 / JCM 6515 / VPI C7-9</strain>
    </source>
</reference>
<reference key="2">
    <citation type="submission" date="2007-06" db="EMBL/GenBank/DDBJ databases">
        <title>Draft genome sequence of Ruminococcus gnavus (ATCC 29149).</title>
        <authorList>
            <person name="Sudarsanam P."/>
            <person name="Ley R."/>
            <person name="Guruge J."/>
            <person name="Turnbaugh P.J."/>
            <person name="Mahowald M."/>
            <person name="Liep D."/>
            <person name="Gordon J."/>
        </authorList>
    </citation>
    <scope>NUCLEOTIDE SEQUENCE [LARGE SCALE GENOMIC DNA]</scope>
    <source>
        <strain>ATCC 29149 / DSM 114966 / JCM 6515 / VPI C7-9</strain>
    </source>
</reference>
<reference key="3">
    <citation type="journal article" date="2013" name="J. Lipid Res.">
        <title>Contribution of the 7beta-hydroxysteroid dehydrogenase from Ruminococcus gnavus N53 to ursodeoxycholic acid formation in the human colon.</title>
        <authorList>
            <person name="Lee J.Y."/>
            <person name="Arai H."/>
            <person name="Nakamura Y."/>
            <person name="Fukiya S."/>
            <person name="Wada M."/>
            <person name="Yokota A."/>
        </authorList>
    </citation>
    <scope>FUNCTION</scope>
    <scope>CATALYTIC ACTIVITY</scope>
    <source>
        <strain>ATCC 29149 / DSM 114966 / JCM 6515 / VPI C7-9</strain>
    </source>
</reference>
<keyword id="KW-0088">Bile acid catabolism</keyword>
<keyword id="KW-0442">Lipid degradation</keyword>
<keyword id="KW-0443">Lipid metabolism</keyword>
<keyword id="KW-0521">NADP</keyword>
<keyword id="KW-0547">Nucleotide-binding</keyword>
<keyword id="KW-0560">Oxidoreductase</keyword>
<keyword id="KW-0753">Steroid metabolism</keyword>
<proteinExistence type="evidence at protein level"/>
<organism>
    <name type="scientific">Mediterraneibacter gnavus (strain ATCC 29149 / DSM 114966 / JCM 6515 / VPI C7-9)</name>
    <name type="common">Ruminococcus gnavus</name>
    <dbReference type="NCBI Taxonomy" id="411470"/>
    <lineage>
        <taxon>Bacteria</taxon>
        <taxon>Bacillati</taxon>
        <taxon>Bacillota</taxon>
        <taxon>Clostridia</taxon>
        <taxon>Lachnospirales</taxon>
        <taxon>Lachnospiraceae</taxon>
        <taxon>Mediterraneibacter</taxon>
    </lineage>
</organism>
<comment type="function">
    <text evidence="5">7beta-hydroxysteroid dehydrogenase that catalyzes the reduction of the 7-oxo group of 7-oxo-lithocholate (7-oxo-LCA), to yield ursodeoxycholate (UDCA). As R.gnavus is a common core bacterium of the human gut microbiota, this enzyme contributes to the formation of UDCA in the human colon. UDCA is regarded as a chemopreventive beneficial secondary bile acid due to its low hydrophobicity; it protects hepatocytes and bile duct epithelial cells against necrosis and apoptosis induced by more hydrophobic secondary bile acids like deoxycholate (DCA). This enzyme is also able to catalyze the reverse reaction in vitro, i.e. the oxidation of the 7beta-hydroxy group of UDCA to 7-oxo-LCA, but much less efficiently than the reduction reaction.</text>
</comment>
<comment type="catalytic activity">
    <reaction evidence="5">
        <text>a 7beta-hydroxysteroid + NADP(+) = a 7-oxosteroid + NADPH + H(+)</text>
        <dbReference type="Rhea" id="RHEA:20233"/>
        <dbReference type="ChEBI" id="CHEBI:15378"/>
        <dbReference type="ChEBI" id="CHEBI:35349"/>
        <dbReference type="ChEBI" id="CHEBI:47789"/>
        <dbReference type="ChEBI" id="CHEBI:57783"/>
        <dbReference type="ChEBI" id="CHEBI:58349"/>
        <dbReference type="EC" id="1.1.1.201"/>
    </reaction>
    <physiologicalReaction direction="right-to-left" evidence="5">
        <dbReference type="Rhea" id="RHEA:20235"/>
    </physiologicalReaction>
</comment>
<comment type="catalytic activity">
    <reaction evidence="5">
        <text>7-oxolithocholate + NADPH + H(+) = ursodeoxycholate + NADP(+)</text>
        <dbReference type="Rhea" id="RHEA:47540"/>
        <dbReference type="ChEBI" id="CHEBI:15378"/>
        <dbReference type="ChEBI" id="CHEBI:57783"/>
        <dbReference type="ChEBI" id="CHEBI:58349"/>
        <dbReference type="ChEBI" id="CHEBI:78604"/>
        <dbReference type="ChEBI" id="CHEBI:78605"/>
    </reaction>
    <physiologicalReaction direction="left-to-right" evidence="5">
        <dbReference type="Rhea" id="RHEA:47541"/>
    </physiologicalReaction>
</comment>
<comment type="similarity">
    <text evidence="4">Belongs to the short-chain dehydrogenases/reductases (SDR) family.</text>
</comment>
<feature type="chain" id="PRO_0000444979" description="7beta-hydroxysteroid dehydrogenase">
    <location>
        <begin position="1"/>
        <end position="263"/>
    </location>
</feature>
<feature type="active site" description="Proton acceptor" evidence="1">
    <location>
        <position position="156"/>
    </location>
</feature>
<feature type="binding site" evidence="1">
    <location>
        <begin position="17"/>
        <end position="21"/>
    </location>
    <ligand>
        <name>NADP(+)</name>
        <dbReference type="ChEBI" id="CHEBI:58349"/>
    </ligand>
</feature>
<feature type="binding site" evidence="1">
    <location>
        <begin position="40"/>
        <end position="41"/>
    </location>
    <ligand>
        <name>NADP(+)</name>
        <dbReference type="ChEBI" id="CHEBI:58349"/>
    </ligand>
</feature>
<feature type="binding site" evidence="1">
    <location>
        <begin position="66"/>
        <end position="67"/>
    </location>
    <ligand>
        <name>NADP(+)</name>
        <dbReference type="ChEBI" id="CHEBI:58349"/>
    </ligand>
</feature>
<feature type="binding site" evidence="1">
    <location>
        <position position="240"/>
    </location>
    <ligand>
        <name>NADP(+)</name>
        <dbReference type="ChEBI" id="CHEBI:58349"/>
    </ligand>
</feature>
<feature type="site" description="Transition state stabilizer" evidence="1">
    <location>
        <position position="143"/>
    </location>
</feature>
<feature type="site" description="Lowers pKa of active site Tyr" evidence="2">
    <location>
        <position position="160"/>
    </location>
</feature>
<name>HSDHB_MEDG7</name>
<gene>
    <name evidence="6" type="ORF">RUMGNA_02585</name>
</gene>
<accession>A7B4V1</accession>
<protein>
    <recommendedName>
        <fullName evidence="3">7beta-hydroxysteroid dehydrogenase</fullName>
        <shortName evidence="3">7beta-HSDH</shortName>
        <ecNumber evidence="5">1.1.1.201</ecNumber>
    </recommendedName>
    <alternativeName>
        <fullName evidence="3">NADP-dependent 7beta-hydroxysteroid dehydrogenase</fullName>
    </alternativeName>
</protein>
<sequence length="263" mass="29289">MTLREKYGEWGIILGATEGVGKAFCERLAKEGMNVVMVGRREEKLKELGEELKNTYEIDYKVVKADFSLPDATDKIFAATENLDMGFMAYVACLHSFGKIQDTPWEKHEAMINVNVVTFMKCFYHYMKIFAAQDRGAVINVSSMTGISSSPWNGQYGAGKAFILKMTEAVACETEKTNVDVEVITLGTTLTPSLLSNLPGGPQGEAVMKTAQTPEEVVDEAFEKLGKELSVISGERNKASVHDWKANHTEDDYIRYMGSFYQE</sequence>
<evidence type="ECO:0000250" key="1">
    <source>
        <dbReference type="UniProtKB" id="A4ECA9"/>
    </source>
</evidence>
<evidence type="ECO:0000250" key="2">
    <source>
        <dbReference type="UniProtKB" id="P0AET8"/>
    </source>
</evidence>
<evidence type="ECO:0000303" key="3">
    <source>
    </source>
</evidence>
<evidence type="ECO:0000305" key="4"/>
<evidence type="ECO:0000305" key="5">
    <source>
    </source>
</evidence>
<evidence type="ECO:0000312" key="6">
    <source>
        <dbReference type="EMBL" id="EDN76974.1"/>
    </source>
</evidence>